<accession>A5IC68</accession>
<evidence type="ECO:0000255" key="1">
    <source>
        <dbReference type="HAMAP-Rule" id="MF_00671"/>
    </source>
</evidence>
<name>TOLB_LEGPC</name>
<protein>
    <recommendedName>
        <fullName evidence="1">Tol-Pal system protein TolB</fullName>
    </recommendedName>
</protein>
<organism>
    <name type="scientific">Legionella pneumophila (strain Corby)</name>
    <dbReference type="NCBI Taxonomy" id="400673"/>
    <lineage>
        <taxon>Bacteria</taxon>
        <taxon>Pseudomonadati</taxon>
        <taxon>Pseudomonadota</taxon>
        <taxon>Gammaproteobacteria</taxon>
        <taxon>Legionellales</taxon>
        <taxon>Legionellaceae</taxon>
        <taxon>Legionella</taxon>
    </lineage>
</organism>
<comment type="function">
    <text evidence="1">Part of the Tol-Pal system, which plays a role in outer membrane invagination during cell division and is important for maintaining outer membrane integrity.</text>
</comment>
<comment type="subunit">
    <text evidence="1">The Tol-Pal system is composed of five core proteins: the inner membrane proteins TolA, TolQ and TolR, the periplasmic protein TolB and the outer membrane protein Pal. They form a network linking the inner and outer membranes and the peptidoglycan layer.</text>
</comment>
<comment type="subcellular location">
    <subcellularLocation>
        <location evidence="1">Periplasm</location>
    </subcellularLocation>
</comment>
<comment type="similarity">
    <text evidence="1">Belongs to the TolB family.</text>
</comment>
<keyword id="KW-0131">Cell cycle</keyword>
<keyword id="KW-0132">Cell division</keyword>
<keyword id="KW-0574">Periplasm</keyword>
<keyword id="KW-0732">Signal</keyword>
<reference key="1">
    <citation type="submission" date="2006-11" db="EMBL/GenBank/DDBJ databases">
        <title>Identification and characterization of a new conjugation/ type IVA secretion system (trb/tra) of L. pneumophila Corby localized on a mobile genomic island.</title>
        <authorList>
            <person name="Gloeckner G."/>
            <person name="Albert-Weissenberger C."/>
            <person name="Weinmann E."/>
            <person name="Jacobi S."/>
            <person name="Schunder E."/>
            <person name="Steinert M."/>
            <person name="Buchrieser C."/>
            <person name="Hacker J."/>
            <person name="Heuner K."/>
        </authorList>
    </citation>
    <scope>NUCLEOTIDE SEQUENCE [LARGE SCALE GENOMIC DNA]</scope>
    <source>
        <strain>Corby</strain>
    </source>
</reference>
<gene>
    <name evidence="1" type="primary">tolB</name>
    <name type="ordered locus">LPC_0995</name>
</gene>
<proteinExistence type="inferred from homology"/>
<dbReference type="EMBL" id="CP000675">
    <property type="protein sequence ID" value="ABQ54968.1"/>
    <property type="molecule type" value="Genomic_DNA"/>
</dbReference>
<dbReference type="RefSeq" id="WP_011946569.1">
    <property type="nucleotide sequence ID" value="NC_009494.2"/>
</dbReference>
<dbReference type="SMR" id="A5IC68"/>
<dbReference type="KEGG" id="lpc:LPC_0995"/>
<dbReference type="HOGENOM" id="CLU_047123_0_0_6"/>
<dbReference type="GO" id="GO:0042597">
    <property type="term" value="C:periplasmic space"/>
    <property type="evidence" value="ECO:0007669"/>
    <property type="project" value="UniProtKB-SubCell"/>
</dbReference>
<dbReference type="GO" id="GO:0051301">
    <property type="term" value="P:cell division"/>
    <property type="evidence" value="ECO:0007669"/>
    <property type="project" value="UniProtKB-UniRule"/>
</dbReference>
<dbReference type="GO" id="GO:0017038">
    <property type="term" value="P:protein import"/>
    <property type="evidence" value="ECO:0007669"/>
    <property type="project" value="InterPro"/>
</dbReference>
<dbReference type="Gene3D" id="2.120.10.30">
    <property type="entry name" value="TolB, C-terminal domain"/>
    <property type="match status" value="1"/>
</dbReference>
<dbReference type="Gene3D" id="3.40.50.10070">
    <property type="entry name" value="TolB, N-terminal domain"/>
    <property type="match status" value="1"/>
</dbReference>
<dbReference type="HAMAP" id="MF_00671">
    <property type="entry name" value="TolB"/>
    <property type="match status" value="1"/>
</dbReference>
<dbReference type="InterPro" id="IPR011042">
    <property type="entry name" value="6-blade_b-propeller_TolB-like"/>
</dbReference>
<dbReference type="InterPro" id="IPR011659">
    <property type="entry name" value="PD40"/>
</dbReference>
<dbReference type="InterPro" id="IPR014167">
    <property type="entry name" value="Tol-Pal_TolB"/>
</dbReference>
<dbReference type="InterPro" id="IPR007195">
    <property type="entry name" value="TolB_N"/>
</dbReference>
<dbReference type="NCBIfam" id="TIGR02800">
    <property type="entry name" value="propeller_TolB"/>
    <property type="match status" value="1"/>
</dbReference>
<dbReference type="PANTHER" id="PTHR36842:SF1">
    <property type="entry name" value="PROTEIN TOLB"/>
    <property type="match status" value="1"/>
</dbReference>
<dbReference type="PANTHER" id="PTHR36842">
    <property type="entry name" value="PROTEIN TOLB HOMOLOG"/>
    <property type="match status" value="1"/>
</dbReference>
<dbReference type="Pfam" id="PF07676">
    <property type="entry name" value="PD40"/>
    <property type="match status" value="3"/>
</dbReference>
<dbReference type="Pfam" id="PF04052">
    <property type="entry name" value="TolB_N"/>
    <property type="match status" value="1"/>
</dbReference>
<dbReference type="SUPFAM" id="SSF52964">
    <property type="entry name" value="TolB, N-terminal domain"/>
    <property type="match status" value="1"/>
</dbReference>
<dbReference type="SUPFAM" id="SSF69304">
    <property type="entry name" value="Tricorn protease N-terminal domain"/>
    <property type="match status" value="1"/>
</dbReference>
<sequence>MFNRIISLFLLLFTGQVIALDLELTQGINSALPIAINSFGSDAAAQEIGNVIENDLTISGQFKIISGPQGANSQSSVSTLRQLGADSVVTGRVNQVGNRIEVSFTLADAVANGNILLTKTFQINANQVRALAHHISDEVYQKLTGERGIFSTRIAYISVQRNGGRSRYSLEVADADGHNPQSLLVSSEPIMSPSWSPNGKSISYVSFEKKKAEIFTVSVETGQRRLITSFPGINGAPAWSPDGQHLAVVLSKSGTPKIYDVDLSSGSMKQLTFGNSIDTEPRYSPDGRSLLFTSGRGGSPQVYRLSLADGQISRVTFEGNYNARASYTPDMKHIVMLHREDRQFNIGVQNTGGGPISNLTFSGLDESPSVSPNSRLVLYATRYQNRGVLGIVSIDGRIRMRLPAREGDVQEPAWSPYLS</sequence>
<feature type="signal peptide" evidence="1">
    <location>
        <begin position="1"/>
        <end position="19"/>
    </location>
</feature>
<feature type="chain" id="PRO_1000026705" description="Tol-Pal system protein TolB" evidence="1">
    <location>
        <begin position="20"/>
        <end position="419"/>
    </location>
</feature>